<reference key="1">
    <citation type="journal article" date="2004" name="Nat. Genet.">
        <title>Complete sequencing and characterization of 21,243 full-length human cDNAs.</title>
        <authorList>
            <person name="Ota T."/>
            <person name="Suzuki Y."/>
            <person name="Nishikawa T."/>
            <person name="Otsuki T."/>
            <person name="Sugiyama T."/>
            <person name="Irie R."/>
            <person name="Wakamatsu A."/>
            <person name="Hayashi K."/>
            <person name="Sato H."/>
            <person name="Nagai K."/>
            <person name="Kimura K."/>
            <person name="Makita H."/>
            <person name="Sekine M."/>
            <person name="Obayashi M."/>
            <person name="Nishi T."/>
            <person name="Shibahara T."/>
            <person name="Tanaka T."/>
            <person name="Ishii S."/>
            <person name="Yamamoto J."/>
            <person name="Saito K."/>
            <person name="Kawai Y."/>
            <person name="Isono Y."/>
            <person name="Nakamura Y."/>
            <person name="Nagahari K."/>
            <person name="Murakami K."/>
            <person name="Yasuda T."/>
            <person name="Iwayanagi T."/>
            <person name="Wagatsuma M."/>
            <person name="Shiratori A."/>
            <person name="Sudo H."/>
            <person name="Hosoiri T."/>
            <person name="Kaku Y."/>
            <person name="Kodaira H."/>
            <person name="Kondo H."/>
            <person name="Sugawara M."/>
            <person name="Takahashi M."/>
            <person name="Kanda K."/>
            <person name="Yokoi T."/>
            <person name="Furuya T."/>
            <person name="Kikkawa E."/>
            <person name="Omura Y."/>
            <person name="Abe K."/>
            <person name="Kamihara K."/>
            <person name="Katsuta N."/>
            <person name="Sato K."/>
            <person name="Tanikawa M."/>
            <person name="Yamazaki M."/>
            <person name="Ninomiya K."/>
            <person name="Ishibashi T."/>
            <person name="Yamashita H."/>
            <person name="Murakawa K."/>
            <person name="Fujimori K."/>
            <person name="Tanai H."/>
            <person name="Kimata M."/>
            <person name="Watanabe M."/>
            <person name="Hiraoka S."/>
            <person name="Chiba Y."/>
            <person name="Ishida S."/>
            <person name="Ono Y."/>
            <person name="Takiguchi S."/>
            <person name="Watanabe S."/>
            <person name="Yosida M."/>
            <person name="Hotuta T."/>
            <person name="Kusano J."/>
            <person name="Kanehori K."/>
            <person name="Takahashi-Fujii A."/>
            <person name="Hara H."/>
            <person name="Tanase T.-O."/>
            <person name="Nomura Y."/>
            <person name="Togiya S."/>
            <person name="Komai F."/>
            <person name="Hara R."/>
            <person name="Takeuchi K."/>
            <person name="Arita M."/>
            <person name="Imose N."/>
            <person name="Musashino K."/>
            <person name="Yuuki H."/>
            <person name="Oshima A."/>
            <person name="Sasaki N."/>
            <person name="Aotsuka S."/>
            <person name="Yoshikawa Y."/>
            <person name="Matsunawa H."/>
            <person name="Ichihara T."/>
            <person name="Shiohata N."/>
            <person name="Sano S."/>
            <person name="Moriya S."/>
            <person name="Momiyama H."/>
            <person name="Satoh N."/>
            <person name="Takami S."/>
            <person name="Terashima Y."/>
            <person name="Suzuki O."/>
            <person name="Nakagawa S."/>
            <person name="Senoh A."/>
            <person name="Mizoguchi H."/>
            <person name="Goto Y."/>
            <person name="Shimizu F."/>
            <person name="Wakebe H."/>
            <person name="Hishigaki H."/>
            <person name="Watanabe T."/>
            <person name="Sugiyama A."/>
            <person name="Takemoto M."/>
            <person name="Kawakami B."/>
            <person name="Yamazaki M."/>
            <person name="Watanabe K."/>
            <person name="Kumagai A."/>
            <person name="Itakura S."/>
            <person name="Fukuzumi Y."/>
            <person name="Fujimori Y."/>
            <person name="Komiyama M."/>
            <person name="Tashiro H."/>
            <person name="Tanigami A."/>
            <person name="Fujiwara T."/>
            <person name="Ono T."/>
            <person name="Yamada K."/>
            <person name="Fujii Y."/>
            <person name="Ozaki K."/>
            <person name="Hirao M."/>
            <person name="Ohmori Y."/>
            <person name="Kawabata A."/>
            <person name="Hikiji T."/>
            <person name="Kobatake N."/>
            <person name="Inagaki H."/>
            <person name="Ikema Y."/>
            <person name="Okamoto S."/>
            <person name="Okitani R."/>
            <person name="Kawakami T."/>
            <person name="Noguchi S."/>
            <person name="Itoh T."/>
            <person name="Shigeta K."/>
            <person name="Senba T."/>
            <person name="Matsumura K."/>
            <person name="Nakajima Y."/>
            <person name="Mizuno T."/>
            <person name="Morinaga M."/>
            <person name="Sasaki M."/>
            <person name="Togashi T."/>
            <person name="Oyama M."/>
            <person name="Hata H."/>
            <person name="Watanabe M."/>
            <person name="Komatsu T."/>
            <person name="Mizushima-Sugano J."/>
            <person name="Satoh T."/>
            <person name="Shirai Y."/>
            <person name="Takahashi Y."/>
            <person name="Nakagawa K."/>
            <person name="Okumura K."/>
            <person name="Nagase T."/>
            <person name="Nomura N."/>
            <person name="Kikuchi H."/>
            <person name="Masuho Y."/>
            <person name="Yamashita R."/>
            <person name="Nakai K."/>
            <person name="Yada T."/>
            <person name="Nakamura Y."/>
            <person name="Ohara O."/>
            <person name="Isogai T."/>
            <person name="Sugano S."/>
        </authorList>
    </citation>
    <scope>NUCLEOTIDE SEQUENCE [LARGE SCALE MRNA] (ISOFORM 2)</scope>
    <source>
        <tissue>Uterus</tissue>
    </source>
</reference>
<reference key="2">
    <citation type="submission" date="2005-07" db="EMBL/GenBank/DDBJ databases">
        <authorList>
            <person name="Mural R.J."/>
            <person name="Istrail S."/>
            <person name="Sutton G.G."/>
            <person name="Florea L."/>
            <person name="Halpern A.L."/>
            <person name="Mobarry C.M."/>
            <person name="Lippert R."/>
            <person name="Walenz B."/>
            <person name="Shatkay H."/>
            <person name="Dew I."/>
            <person name="Miller J.R."/>
            <person name="Flanigan M.J."/>
            <person name="Edwards N.J."/>
            <person name="Bolanos R."/>
            <person name="Fasulo D."/>
            <person name="Halldorsson B.V."/>
            <person name="Hannenhalli S."/>
            <person name="Turner R."/>
            <person name="Yooseph S."/>
            <person name="Lu F."/>
            <person name="Nusskern D.R."/>
            <person name="Shue B.C."/>
            <person name="Zheng X.H."/>
            <person name="Zhong F."/>
            <person name="Delcher A.L."/>
            <person name="Huson D.H."/>
            <person name="Kravitz S.A."/>
            <person name="Mouchard L."/>
            <person name="Reinert K."/>
            <person name="Remington K.A."/>
            <person name="Clark A.G."/>
            <person name="Waterman M.S."/>
            <person name="Eichler E.E."/>
            <person name="Adams M.D."/>
            <person name="Hunkapiller M.W."/>
            <person name="Myers E.W."/>
            <person name="Venter J.C."/>
        </authorList>
    </citation>
    <scope>NUCLEOTIDE SEQUENCE [LARGE SCALE GENOMIC DNA]</scope>
</reference>
<reference key="3">
    <citation type="journal article" date="2004" name="Genome Res.">
        <title>The status, quality, and expansion of the NIH full-length cDNA project: the Mammalian Gene Collection (MGC).</title>
        <authorList>
            <consortium name="The MGC Project Team"/>
        </authorList>
    </citation>
    <scope>NUCLEOTIDE SEQUENCE [LARGE SCALE MRNA] (ISOFORM 1)</scope>
    <source>
        <tissue>Urinary bladder</tissue>
        <tissue>Uterus</tissue>
    </source>
</reference>
<feature type="chain" id="PRO_0000330293" description="KRAB domain-containing protein 5">
    <location>
        <begin position="1"/>
        <end position="126"/>
    </location>
</feature>
<feature type="domain" description="KRAB" evidence="1">
    <location>
        <begin position="4"/>
        <end position="75"/>
    </location>
</feature>
<feature type="splice variant" id="VSP_033024" description="In isoform 2." evidence="2">
    <location>
        <begin position="1"/>
        <end position="70"/>
    </location>
</feature>
<feature type="splice variant" id="VSP_033025" description="In isoform 2." evidence="2">
    <original>VAIQ</original>
    <variation>MVNV</variation>
    <location>
        <begin position="71"/>
        <end position="74"/>
    </location>
</feature>
<feature type="splice variant" id="VSP_033026" description="In isoform 2." evidence="2">
    <original>IILW</original>
    <variation>CEGHNGYYDGHTKCKTTTYNKNLTVTGGQKHEKTQFMSVAFSKPCVSVSKCQHQFLKLTFSFKGNLDNPNSDLVHVSNNHLNQLKYRTGVNVQSNISEKERFKNEEVISKYDQFDGSLLKVCFTNK</variation>
    <location>
        <begin position="123"/>
        <end position="126"/>
    </location>
</feature>
<evidence type="ECO:0000255" key="1">
    <source>
        <dbReference type="PROSITE-ProRule" id="PRU00119"/>
    </source>
</evidence>
<evidence type="ECO:0000303" key="2">
    <source>
    </source>
</evidence>
<evidence type="ECO:0000305" key="3"/>
<evidence type="ECO:0000312" key="4">
    <source>
        <dbReference type="HGNC" id="HGNC:26987"/>
    </source>
</evidence>
<keyword id="KW-0025">Alternative splicing</keyword>
<keyword id="KW-1267">Proteomics identification</keyword>
<keyword id="KW-1185">Reference proteome</keyword>
<organism>
    <name type="scientific">Homo sapiens</name>
    <name type="common">Human</name>
    <dbReference type="NCBI Taxonomy" id="9606"/>
    <lineage>
        <taxon>Eukaryota</taxon>
        <taxon>Metazoa</taxon>
        <taxon>Chordata</taxon>
        <taxon>Craniata</taxon>
        <taxon>Vertebrata</taxon>
        <taxon>Euteleostomi</taxon>
        <taxon>Mammalia</taxon>
        <taxon>Eutheria</taxon>
        <taxon>Euarchontoglires</taxon>
        <taxon>Primates</taxon>
        <taxon>Haplorrhini</taxon>
        <taxon>Catarrhini</taxon>
        <taxon>Hominidae</taxon>
        <taxon>Homo</taxon>
    </lineage>
</organism>
<comment type="interaction">
    <interactant intactId="EBI-2796279">
        <id>Q7Z2F6</id>
    </interactant>
    <interactant intactId="EBI-2107455">
        <id>Q08AM6</id>
        <label>VAC14</label>
    </interactant>
    <organismsDiffer>false</organismsDiffer>
    <experiments>3</experiments>
</comment>
<comment type="alternative products">
    <event type="alternative splicing"/>
    <isoform>
        <id>Q7Z2F6-1</id>
        <name>1</name>
        <sequence type="displayed"/>
    </isoform>
    <isoform>
        <id>Q7Z2F6-2</id>
        <name>2</name>
        <sequence type="described" ref="VSP_033024 VSP_033025 VSP_033026"/>
    </isoform>
</comment>
<accession>Q7Z2F6</accession>
<accession>Q6ZQX1</accession>
<gene>
    <name evidence="4" type="primary">KRBOX5</name>
    <name type="synonym">ZNF720</name>
</gene>
<proteinExistence type="evidence at protein level"/>
<name>KRBX5_HUMAN</name>
<protein>
    <recommendedName>
        <fullName evidence="3">KRAB domain-containing protein 5</fullName>
    </recommendedName>
</protein>
<dbReference type="EMBL" id="AK128671">
    <property type="status" value="NOT_ANNOTATED_CDS"/>
    <property type="molecule type" value="mRNA"/>
</dbReference>
<dbReference type="EMBL" id="CH471192">
    <property type="protein sequence ID" value="EAW52108.1"/>
    <property type="molecule type" value="Genomic_DNA"/>
</dbReference>
<dbReference type="EMBL" id="BC018134">
    <property type="protein sequence ID" value="AAH18134.1"/>
    <property type="molecule type" value="mRNA"/>
</dbReference>
<dbReference type="EMBL" id="BC055408">
    <property type="protein sequence ID" value="AAH55408.1"/>
    <property type="molecule type" value="mRNA"/>
</dbReference>
<dbReference type="CCDS" id="CCDS45473.1">
    <molecule id="Q7Z2F6-1"/>
</dbReference>
<dbReference type="RefSeq" id="NP_001124385.1">
    <molecule id="Q7Z2F6-1"/>
    <property type="nucleotide sequence ID" value="NM_001130913.2"/>
</dbReference>
<dbReference type="SMR" id="Q7Z2F6"/>
<dbReference type="BioGRID" id="125864">
    <property type="interactions" value="5"/>
</dbReference>
<dbReference type="FunCoup" id="Q7Z2F6">
    <property type="interactions" value="240"/>
</dbReference>
<dbReference type="IntAct" id="Q7Z2F6">
    <property type="interactions" value="6"/>
</dbReference>
<dbReference type="STRING" id="9606.ENSP00000319222"/>
<dbReference type="iPTMnet" id="Q7Z2F6"/>
<dbReference type="PhosphoSitePlus" id="Q7Z2F6"/>
<dbReference type="BioMuta" id="ZNF720"/>
<dbReference type="DMDM" id="74738650"/>
<dbReference type="jPOST" id="Q7Z2F6"/>
<dbReference type="MassIVE" id="Q7Z2F6"/>
<dbReference type="PaxDb" id="9606-ENSP00000319222"/>
<dbReference type="PeptideAtlas" id="Q7Z2F6"/>
<dbReference type="ProteomicsDB" id="68956">
    <molecule id="Q7Z2F6-1"/>
</dbReference>
<dbReference type="ProteomicsDB" id="68957">
    <molecule id="Q7Z2F6-2"/>
</dbReference>
<dbReference type="Antibodypedia" id="51739">
    <property type="antibodies" value="61 antibodies from 13 providers"/>
</dbReference>
<dbReference type="DNASU" id="124411"/>
<dbReference type="Ensembl" id="ENST00000316491.14">
    <molecule id="Q7Z2F6-1"/>
    <property type="protein sequence ID" value="ENSP00000319222.9"/>
    <property type="gene ID" value="ENSG00000197302.11"/>
</dbReference>
<dbReference type="Ensembl" id="ENST00000398696.3">
    <molecule id="Q7Z2F6-2"/>
    <property type="protein sequence ID" value="ENSP00000443758.1"/>
    <property type="gene ID" value="ENSG00000197302.11"/>
</dbReference>
<dbReference type="GeneID" id="124411"/>
<dbReference type="KEGG" id="hsa:124411"/>
<dbReference type="MANE-Select" id="ENST00000316491.14">
    <property type="protein sequence ID" value="ENSP00000319222.9"/>
    <property type="RefSeq nucleotide sequence ID" value="NM_001130913.2"/>
    <property type="RefSeq protein sequence ID" value="NP_001124385.1"/>
</dbReference>
<dbReference type="UCSC" id="uc002ecn.5">
    <molecule id="Q7Z2F6-1"/>
    <property type="organism name" value="human"/>
</dbReference>
<dbReference type="AGR" id="HGNC:26987"/>
<dbReference type="CTD" id="124411"/>
<dbReference type="GeneCards" id="KRBOX5"/>
<dbReference type="HGNC" id="HGNC:26987">
    <property type="gene designation" value="KRBOX5"/>
</dbReference>
<dbReference type="HPA" id="ENSG00000197302">
    <property type="expression patterns" value="Low tissue specificity"/>
</dbReference>
<dbReference type="neXtProt" id="NX_Q7Z2F6"/>
<dbReference type="OpenTargets" id="ENSG00000197302"/>
<dbReference type="VEuPathDB" id="HostDB:ENSG00000197302"/>
<dbReference type="eggNOG" id="KOG1721">
    <property type="taxonomic scope" value="Eukaryota"/>
</dbReference>
<dbReference type="GeneTree" id="ENSGT00940000164574"/>
<dbReference type="HOGENOM" id="CLU_002678_69_5_1"/>
<dbReference type="InParanoid" id="Q7Z2F6"/>
<dbReference type="OMA" id="VWESEAQ"/>
<dbReference type="PAN-GO" id="Q7Z2F6">
    <property type="GO annotations" value="0 GO annotations based on evolutionary models"/>
</dbReference>
<dbReference type="PhylomeDB" id="Q7Z2F6"/>
<dbReference type="TreeFam" id="TF340491"/>
<dbReference type="PathwayCommons" id="Q7Z2F6"/>
<dbReference type="Reactome" id="R-HSA-212436">
    <property type="pathway name" value="Generic Transcription Pathway"/>
</dbReference>
<dbReference type="SignaLink" id="Q7Z2F6"/>
<dbReference type="BioGRID-ORCS" id="124411">
    <property type="hits" value="353 hits in 1091 CRISPR screens"/>
</dbReference>
<dbReference type="ChiTaRS" id="ZNF720">
    <property type="organism name" value="human"/>
</dbReference>
<dbReference type="GenomeRNAi" id="124411"/>
<dbReference type="Pharos" id="Q7Z2F6">
    <property type="development level" value="Tdark"/>
</dbReference>
<dbReference type="PRO" id="PR:Q7Z2F6"/>
<dbReference type="Proteomes" id="UP000005640">
    <property type="component" value="Chromosome 16"/>
</dbReference>
<dbReference type="RNAct" id="Q7Z2F6">
    <property type="molecule type" value="protein"/>
</dbReference>
<dbReference type="Bgee" id="ENSG00000197302">
    <property type="expression patterns" value="Expressed in epithelial cell of pancreas and 196 other cell types or tissues"/>
</dbReference>
<dbReference type="ExpressionAtlas" id="Q7Z2F6">
    <property type="expression patterns" value="baseline and differential"/>
</dbReference>
<dbReference type="GO" id="GO:0006355">
    <property type="term" value="P:regulation of DNA-templated transcription"/>
    <property type="evidence" value="ECO:0007669"/>
    <property type="project" value="InterPro"/>
</dbReference>
<dbReference type="CDD" id="cd07765">
    <property type="entry name" value="KRAB_A-box"/>
    <property type="match status" value="1"/>
</dbReference>
<dbReference type="Gene3D" id="6.10.140.140">
    <property type="match status" value="1"/>
</dbReference>
<dbReference type="InterPro" id="IPR001909">
    <property type="entry name" value="KRAB"/>
</dbReference>
<dbReference type="InterPro" id="IPR036051">
    <property type="entry name" value="KRAB_dom_sf"/>
</dbReference>
<dbReference type="InterPro" id="IPR050169">
    <property type="entry name" value="Krueppel_C2H2_ZnF"/>
</dbReference>
<dbReference type="PANTHER" id="PTHR23232">
    <property type="entry name" value="KRAB DOMAIN C2H2 ZINC FINGER"/>
    <property type="match status" value="1"/>
</dbReference>
<dbReference type="PANTHER" id="PTHR23232:SF158">
    <property type="entry name" value="KRAB DOMAIN-CONTAINING PROTEIN 5"/>
    <property type="match status" value="1"/>
</dbReference>
<dbReference type="Pfam" id="PF01352">
    <property type="entry name" value="KRAB"/>
    <property type="match status" value="1"/>
</dbReference>
<dbReference type="SMART" id="SM00349">
    <property type="entry name" value="KRAB"/>
    <property type="match status" value="1"/>
</dbReference>
<dbReference type="SUPFAM" id="SSF109640">
    <property type="entry name" value="KRAB domain (Kruppel-associated box)"/>
    <property type="match status" value="1"/>
</dbReference>
<dbReference type="PROSITE" id="PS50805">
    <property type="entry name" value="KRAB"/>
    <property type="match status" value="1"/>
</dbReference>
<sequence length="126" mass="14454">MGLLTFRDVAIEFSREEWEHLDSDQKLLYGDVMLENYGNLVSLGLAVSKPDLITFLEQRKEPWNVKSAETVAIQPDIFSHDTQGLLRKKLIEASFQKVILDGYGSCGPQNLNLRKEWESEGKIILW</sequence>